<organism>
    <name type="scientific">Human papillomavirus 17</name>
    <dbReference type="NCBI Taxonomy" id="10607"/>
    <lineage>
        <taxon>Viruses</taxon>
        <taxon>Monodnaviria</taxon>
        <taxon>Shotokuvirae</taxon>
        <taxon>Cossaviricota</taxon>
        <taxon>Papovaviricetes</taxon>
        <taxon>Zurhausenvirales</taxon>
        <taxon>Papillomaviridae</taxon>
        <taxon>Firstpapillomavirinae</taxon>
        <taxon>Betapapillomavirus</taxon>
        <taxon>Betapapillomavirus 2</taxon>
    </lineage>
</organism>
<accession>P36805</accession>
<reference key="1">
    <citation type="journal article" date="1994" name="Curr. Top. Microbiol. Immunol.">
        <title>Primer-directed sequencing of human papillomavirus types.</title>
        <authorList>
            <person name="Delius H."/>
            <person name="Hofmann B."/>
        </authorList>
    </citation>
    <scope>NUCLEOTIDE SEQUENCE [GENOMIC DNA]</scope>
</reference>
<feature type="chain" id="PRO_0000133337" description="Protein E6">
    <location>
        <begin position="1"/>
        <end position="141"/>
    </location>
</feature>
<feature type="zinc finger region" evidence="1">
    <location>
        <begin position="27"/>
        <end position="64"/>
    </location>
</feature>
<feature type="zinc finger region" evidence="1">
    <location>
        <begin position="101"/>
        <end position="137"/>
    </location>
</feature>
<sequence length="141" mass="16528">MDRPKPQTVRELADTLCIPLVDILLPCRFCNRFLAYIELVAFDLKGLQLIWTEEDFVFACCSSCAYATAQYEFSKFYEQSVSGRELEEIEHKPIGEIPIRCKFCLKKLDLLEKLDTCYRHQQFHKVRRNWKGLCRHCGSIG</sequence>
<organismHost>
    <name type="scientific">Homo sapiens</name>
    <name type="common">Human</name>
    <dbReference type="NCBI Taxonomy" id="9606"/>
</organismHost>
<proteinExistence type="inferred from homology"/>
<dbReference type="EMBL" id="X74469">
    <property type="protein sequence ID" value="CAA52512.1"/>
    <property type="molecule type" value="Genomic_DNA"/>
</dbReference>
<dbReference type="PIR" id="S36479">
    <property type="entry name" value="S36479"/>
</dbReference>
<dbReference type="SMR" id="P36805"/>
<dbReference type="Proteomes" id="UP000006932">
    <property type="component" value="Genome"/>
</dbReference>
<dbReference type="GO" id="GO:0030430">
    <property type="term" value="C:host cell cytoplasm"/>
    <property type="evidence" value="ECO:0007669"/>
    <property type="project" value="UniProtKB-SubCell"/>
</dbReference>
<dbReference type="GO" id="GO:0042025">
    <property type="term" value="C:host cell nucleus"/>
    <property type="evidence" value="ECO:0007669"/>
    <property type="project" value="UniProtKB-SubCell"/>
</dbReference>
<dbReference type="GO" id="GO:0003677">
    <property type="term" value="F:DNA binding"/>
    <property type="evidence" value="ECO:0007669"/>
    <property type="project" value="UniProtKB-UniRule"/>
</dbReference>
<dbReference type="GO" id="GO:0008270">
    <property type="term" value="F:zinc ion binding"/>
    <property type="evidence" value="ECO:0007669"/>
    <property type="project" value="UniProtKB-KW"/>
</dbReference>
<dbReference type="GO" id="GO:0006351">
    <property type="term" value="P:DNA-templated transcription"/>
    <property type="evidence" value="ECO:0007669"/>
    <property type="project" value="UniProtKB-UniRule"/>
</dbReference>
<dbReference type="GO" id="GO:0006355">
    <property type="term" value="P:regulation of DNA-templated transcription"/>
    <property type="evidence" value="ECO:0007669"/>
    <property type="project" value="UniProtKB-UniRule"/>
</dbReference>
<dbReference type="GO" id="GO:0052150">
    <property type="term" value="P:symbiont-mediated perturbation of host apoptosis"/>
    <property type="evidence" value="ECO:0007669"/>
    <property type="project" value="UniProtKB-KW"/>
</dbReference>
<dbReference type="GO" id="GO:0039648">
    <property type="term" value="P:symbiont-mediated perturbation of host ubiquitin-like protein modification"/>
    <property type="evidence" value="ECO:0007669"/>
    <property type="project" value="UniProtKB-UniRule"/>
</dbReference>
<dbReference type="GO" id="GO:0052170">
    <property type="term" value="P:symbiont-mediated suppression of host innate immune response"/>
    <property type="evidence" value="ECO:0007669"/>
    <property type="project" value="UniProtKB-KW"/>
</dbReference>
<dbReference type="GO" id="GO:0039502">
    <property type="term" value="P:symbiont-mediated suppression of host type I interferon-mediated signaling pathway"/>
    <property type="evidence" value="ECO:0007669"/>
    <property type="project" value="UniProtKB-UniRule"/>
</dbReference>
<dbReference type="Gene3D" id="3.30.240.40">
    <property type="entry name" value="E6 early regulatory protein"/>
    <property type="match status" value="2"/>
</dbReference>
<dbReference type="HAMAP" id="MF_04006">
    <property type="entry name" value="HPV_E6"/>
    <property type="match status" value="1"/>
</dbReference>
<dbReference type="InterPro" id="IPR001334">
    <property type="entry name" value="E6"/>
</dbReference>
<dbReference type="InterPro" id="IPR038575">
    <property type="entry name" value="E6_sf"/>
</dbReference>
<dbReference type="Pfam" id="PF00518">
    <property type="entry name" value="E6"/>
    <property type="match status" value="1"/>
</dbReference>
<dbReference type="SUPFAM" id="SSF161229">
    <property type="entry name" value="E6 C-terminal domain-like"/>
    <property type="match status" value="2"/>
</dbReference>
<comment type="function">
    <text evidence="1">Plays a major role in the induction and maintenance of cellular transformation. E6 associates with host UBE3A/E6-AP ubiquitin-protein ligase and modulates its activity. Protects host keratinocytes from apoptosis by mediating the degradation of host BAK1. May also inhibit host immune response.</text>
</comment>
<comment type="subunit">
    <text evidence="1">Forms homodimers. Interacts with ubiquitin-protein ligase UBE3A/E6-AP; this interaction stimulates UBE3A ubiquitin activity. Interacts with host BAK1.</text>
</comment>
<comment type="subcellular location">
    <subcellularLocation>
        <location evidence="1">Host cytoplasm</location>
    </subcellularLocation>
    <subcellularLocation>
        <location evidence="1">Host nucleus</location>
    </subcellularLocation>
</comment>
<comment type="similarity">
    <text evidence="1 2">Belongs to the papillomaviridae E6 protein family.</text>
</comment>
<protein>
    <recommendedName>
        <fullName evidence="1">Protein E6</fullName>
    </recommendedName>
</protein>
<gene>
    <name evidence="1" type="primary">E6</name>
</gene>
<evidence type="ECO:0000255" key="1">
    <source>
        <dbReference type="HAMAP-Rule" id="MF_04006"/>
    </source>
</evidence>
<evidence type="ECO:0000305" key="2"/>
<name>VE6_HPV17</name>
<keyword id="KW-0010">Activator</keyword>
<keyword id="KW-0238">DNA-binding</keyword>
<keyword id="KW-0244">Early protein</keyword>
<keyword id="KW-1035">Host cytoplasm</keyword>
<keyword id="KW-1048">Host nucleus</keyword>
<keyword id="KW-0945">Host-virus interaction</keyword>
<keyword id="KW-1090">Inhibition of host innate immune response by virus</keyword>
<keyword id="KW-0479">Metal-binding</keyword>
<keyword id="KW-1119">Modulation of host cell apoptosis by virus</keyword>
<keyword id="KW-0804">Transcription</keyword>
<keyword id="KW-0805">Transcription regulation</keyword>
<keyword id="KW-0899">Viral immunoevasion</keyword>
<keyword id="KW-0862">Zinc</keyword>
<keyword id="KW-0863">Zinc-finger</keyword>